<gene>
    <name type="primary">nap</name>
    <name type="ordered locus">BSU05440</name>
</gene>
<name>NAP_BACSU</name>
<keyword id="KW-0002">3D-structure</keyword>
<keyword id="KW-0378">Hydrolase</keyword>
<keyword id="KW-1185">Reference proteome</keyword>
<proteinExistence type="evidence at protein level"/>
<evidence type="ECO:0000250" key="1"/>
<evidence type="ECO:0000269" key="2">
    <source ref="3"/>
</evidence>
<evidence type="ECO:0000305" key="3"/>
<evidence type="ECO:0007829" key="4">
    <source>
        <dbReference type="PDB" id="2R11"/>
    </source>
</evidence>
<reference key="1">
    <citation type="submission" date="1997-03" db="EMBL/GenBank/DDBJ databases">
        <title>A 148 kbp sequence of the region between 35 and 47 degree of the Bacillus subtilis genome.</title>
        <authorList>
            <person name="Kasahara Y."/>
            <person name="Nakai S."/>
            <person name="Lee S."/>
            <person name="Sadaie Y."/>
            <person name="Ogasawara N."/>
        </authorList>
    </citation>
    <scope>NUCLEOTIDE SEQUENCE [GENOMIC DNA]</scope>
    <source>
        <strain>168</strain>
    </source>
</reference>
<reference key="2">
    <citation type="journal article" date="1997" name="Nature">
        <title>The complete genome sequence of the Gram-positive bacterium Bacillus subtilis.</title>
        <authorList>
            <person name="Kunst F."/>
            <person name="Ogasawara N."/>
            <person name="Moszer I."/>
            <person name="Albertini A.M."/>
            <person name="Alloni G."/>
            <person name="Azevedo V."/>
            <person name="Bertero M.G."/>
            <person name="Bessieres P."/>
            <person name="Bolotin A."/>
            <person name="Borchert S."/>
            <person name="Borriss R."/>
            <person name="Boursier L."/>
            <person name="Brans A."/>
            <person name="Braun M."/>
            <person name="Brignell S.C."/>
            <person name="Bron S."/>
            <person name="Brouillet S."/>
            <person name="Bruschi C.V."/>
            <person name="Caldwell B."/>
            <person name="Capuano V."/>
            <person name="Carter N.M."/>
            <person name="Choi S.-K."/>
            <person name="Codani J.-J."/>
            <person name="Connerton I.F."/>
            <person name="Cummings N.J."/>
            <person name="Daniel R.A."/>
            <person name="Denizot F."/>
            <person name="Devine K.M."/>
            <person name="Duesterhoeft A."/>
            <person name="Ehrlich S.D."/>
            <person name="Emmerson P.T."/>
            <person name="Entian K.-D."/>
            <person name="Errington J."/>
            <person name="Fabret C."/>
            <person name="Ferrari E."/>
            <person name="Foulger D."/>
            <person name="Fritz C."/>
            <person name="Fujita M."/>
            <person name="Fujita Y."/>
            <person name="Fuma S."/>
            <person name="Galizzi A."/>
            <person name="Galleron N."/>
            <person name="Ghim S.-Y."/>
            <person name="Glaser P."/>
            <person name="Goffeau A."/>
            <person name="Golightly E.J."/>
            <person name="Grandi G."/>
            <person name="Guiseppi G."/>
            <person name="Guy B.J."/>
            <person name="Haga K."/>
            <person name="Haiech J."/>
            <person name="Harwood C.R."/>
            <person name="Henaut A."/>
            <person name="Hilbert H."/>
            <person name="Holsappel S."/>
            <person name="Hosono S."/>
            <person name="Hullo M.-F."/>
            <person name="Itaya M."/>
            <person name="Jones L.-M."/>
            <person name="Joris B."/>
            <person name="Karamata D."/>
            <person name="Kasahara Y."/>
            <person name="Klaerr-Blanchard M."/>
            <person name="Klein C."/>
            <person name="Kobayashi Y."/>
            <person name="Koetter P."/>
            <person name="Koningstein G."/>
            <person name="Krogh S."/>
            <person name="Kumano M."/>
            <person name="Kurita K."/>
            <person name="Lapidus A."/>
            <person name="Lardinois S."/>
            <person name="Lauber J."/>
            <person name="Lazarevic V."/>
            <person name="Lee S.-M."/>
            <person name="Levine A."/>
            <person name="Liu H."/>
            <person name="Masuda S."/>
            <person name="Mauel C."/>
            <person name="Medigue C."/>
            <person name="Medina N."/>
            <person name="Mellado R.P."/>
            <person name="Mizuno M."/>
            <person name="Moestl D."/>
            <person name="Nakai S."/>
            <person name="Noback M."/>
            <person name="Noone D."/>
            <person name="O'Reilly M."/>
            <person name="Ogawa K."/>
            <person name="Ogiwara A."/>
            <person name="Oudega B."/>
            <person name="Park S.-H."/>
            <person name="Parro V."/>
            <person name="Pohl T.M."/>
            <person name="Portetelle D."/>
            <person name="Porwollik S."/>
            <person name="Prescott A.M."/>
            <person name="Presecan E."/>
            <person name="Pujic P."/>
            <person name="Purnelle B."/>
            <person name="Rapoport G."/>
            <person name="Rey M."/>
            <person name="Reynolds S."/>
            <person name="Rieger M."/>
            <person name="Rivolta C."/>
            <person name="Rocha E."/>
            <person name="Roche B."/>
            <person name="Rose M."/>
            <person name="Sadaie Y."/>
            <person name="Sato T."/>
            <person name="Scanlan E."/>
            <person name="Schleich S."/>
            <person name="Schroeter R."/>
            <person name="Scoffone F."/>
            <person name="Sekiguchi J."/>
            <person name="Sekowska A."/>
            <person name="Seror S.J."/>
            <person name="Serror P."/>
            <person name="Shin B.-S."/>
            <person name="Soldo B."/>
            <person name="Sorokin A."/>
            <person name="Tacconi E."/>
            <person name="Takagi T."/>
            <person name="Takahashi H."/>
            <person name="Takemaru K."/>
            <person name="Takeuchi M."/>
            <person name="Tamakoshi A."/>
            <person name="Tanaka T."/>
            <person name="Terpstra P."/>
            <person name="Tognoni A."/>
            <person name="Tosato V."/>
            <person name="Uchiyama S."/>
            <person name="Vandenbol M."/>
            <person name="Vannier F."/>
            <person name="Vassarotti A."/>
            <person name="Viari A."/>
            <person name="Wambutt R."/>
            <person name="Wedler E."/>
            <person name="Wedler H."/>
            <person name="Weitzenegger T."/>
            <person name="Winters P."/>
            <person name="Wipat A."/>
            <person name="Yamamoto H."/>
            <person name="Yamane K."/>
            <person name="Yasumoto K."/>
            <person name="Yata K."/>
            <person name="Yoshida K."/>
            <person name="Yoshikawa H.-F."/>
            <person name="Zumstein E."/>
            <person name="Yoshikawa H."/>
            <person name="Danchin A."/>
        </authorList>
    </citation>
    <scope>NUCLEOTIDE SEQUENCE [LARGE SCALE GENOMIC DNA]</scope>
    <source>
        <strain>168</strain>
    </source>
</reference>
<reference key="3">
    <citation type="submission" date="2007-09" db="PDB data bank">
        <title>Crystal structure of putative hydrolase (2632844) from Bacillus subtilis at 1.96 A resolution.</title>
        <authorList>
            <consortium name="Joint center for structural genomics (JCSG)"/>
        </authorList>
    </citation>
    <scope>X-RAY CRYSTALLOGRAPHY (1.96 ANGSTROMS) OF 1-294 IN COMPLEX WITH TRIETHYLENE GLYCOL</scope>
    <scope>SUBUNIT</scope>
</reference>
<dbReference type="EC" id="3.1.1.1"/>
<dbReference type="EMBL" id="AB001488">
    <property type="protein sequence ID" value="BAA19378.1"/>
    <property type="molecule type" value="Genomic_DNA"/>
</dbReference>
<dbReference type="EMBL" id="AL009126">
    <property type="protein sequence ID" value="CAB12351.1"/>
    <property type="molecule type" value="Genomic_DNA"/>
</dbReference>
<dbReference type="PIR" id="C69664">
    <property type="entry name" value="C69664"/>
</dbReference>
<dbReference type="RefSeq" id="WP_003242638.1">
    <property type="nucleotide sequence ID" value="NZ_OZ025638.1"/>
</dbReference>
<dbReference type="PDB" id="2R11">
    <property type="method" value="X-ray"/>
    <property type="resolution" value="1.96 A"/>
    <property type="chains" value="A/B/C/D=1-294"/>
</dbReference>
<dbReference type="PDBsum" id="2R11"/>
<dbReference type="SMR" id="P96688"/>
<dbReference type="FunCoup" id="P96688">
    <property type="interactions" value="91"/>
</dbReference>
<dbReference type="STRING" id="224308.BSU05440"/>
<dbReference type="ESTHER" id="bacsu-cbxnp">
    <property type="family name" value="6_AlphaBeta_hydrolase"/>
</dbReference>
<dbReference type="PaxDb" id="224308-BSU05440"/>
<dbReference type="DNASU" id="938069"/>
<dbReference type="EnsemblBacteria" id="CAB12351">
    <property type="protein sequence ID" value="CAB12351"/>
    <property type="gene ID" value="BSU_05440"/>
</dbReference>
<dbReference type="GeneID" id="938069"/>
<dbReference type="KEGG" id="bsu:BSU05440"/>
<dbReference type="PATRIC" id="fig|224308.179.peg.583"/>
<dbReference type="eggNOG" id="COG0596">
    <property type="taxonomic scope" value="Bacteria"/>
</dbReference>
<dbReference type="InParanoid" id="P96688"/>
<dbReference type="OrthoDB" id="5513277at2"/>
<dbReference type="PhylomeDB" id="P96688"/>
<dbReference type="BioCyc" id="BSUB:BSU05440-MONOMER"/>
<dbReference type="EvolutionaryTrace" id="P96688"/>
<dbReference type="Proteomes" id="UP000001570">
    <property type="component" value="Chromosome"/>
</dbReference>
<dbReference type="GO" id="GO:0106435">
    <property type="term" value="F:carboxylesterase activity"/>
    <property type="evidence" value="ECO:0007669"/>
    <property type="project" value="UniProtKB-EC"/>
</dbReference>
<dbReference type="Gene3D" id="3.40.50.1820">
    <property type="entry name" value="alpha/beta hydrolase"/>
    <property type="match status" value="1"/>
</dbReference>
<dbReference type="InterPro" id="IPR000073">
    <property type="entry name" value="AB_hydrolase_1"/>
</dbReference>
<dbReference type="InterPro" id="IPR029058">
    <property type="entry name" value="AB_hydrolase_fold"/>
</dbReference>
<dbReference type="InterPro" id="IPR050266">
    <property type="entry name" value="AB_hydrolase_sf"/>
</dbReference>
<dbReference type="PANTHER" id="PTHR43798">
    <property type="entry name" value="MONOACYLGLYCEROL LIPASE"/>
    <property type="match status" value="1"/>
</dbReference>
<dbReference type="Pfam" id="PF00561">
    <property type="entry name" value="Abhydrolase_1"/>
    <property type="match status" value="1"/>
</dbReference>
<dbReference type="SUPFAM" id="SSF53474">
    <property type="entry name" value="alpha/beta-Hydrolases"/>
    <property type="match status" value="1"/>
</dbReference>
<comment type="catalytic activity">
    <reaction>
        <text>a carboxylic ester + H2O = an alcohol + a carboxylate + H(+)</text>
        <dbReference type="Rhea" id="RHEA:21164"/>
        <dbReference type="ChEBI" id="CHEBI:15377"/>
        <dbReference type="ChEBI" id="CHEBI:15378"/>
        <dbReference type="ChEBI" id="CHEBI:29067"/>
        <dbReference type="ChEBI" id="CHEBI:30879"/>
        <dbReference type="ChEBI" id="CHEBI:33308"/>
        <dbReference type="EC" id="3.1.1.1"/>
    </reaction>
</comment>
<comment type="subunit">
    <text evidence="2">Monomer.</text>
</comment>
<comment type="similarity">
    <text evidence="3">Belongs to the AB hydrolase superfamily.</text>
</comment>
<organism>
    <name type="scientific">Bacillus subtilis (strain 168)</name>
    <dbReference type="NCBI Taxonomy" id="224308"/>
    <lineage>
        <taxon>Bacteria</taxon>
        <taxon>Bacillati</taxon>
        <taxon>Bacillota</taxon>
        <taxon>Bacilli</taxon>
        <taxon>Bacillales</taxon>
        <taxon>Bacillaceae</taxon>
        <taxon>Bacillus</taxon>
    </lineage>
</organism>
<feature type="chain" id="PRO_0000360816" description="Uncharacterized carboxylesterase nap">
    <location>
        <begin position="1"/>
        <end position="300"/>
    </location>
</feature>
<feature type="active site" description="Proton acceptor" evidence="1">
    <location>
        <position position="274"/>
    </location>
</feature>
<feature type="site" description="Transition state stabilizer" evidence="1">
    <location>
        <position position="130"/>
    </location>
</feature>
<feature type="helix" evidence="4">
    <location>
        <begin position="13"/>
        <end position="26"/>
    </location>
</feature>
<feature type="strand" evidence="4">
    <location>
        <begin position="34"/>
        <end position="38"/>
    </location>
</feature>
<feature type="strand" evidence="4">
    <location>
        <begin position="43"/>
        <end position="51"/>
    </location>
</feature>
<feature type="strand" evidence="4">
    <location>
        <begin position="57"/>
        <end position="61"/>
    </location>
</feature>
<feature type="turn" evidence="4">
    <location>
        <begin position="64"/>
        <end position="66"/>
    </location>
</feature>
<feature type="helix" evidence="4">
    <location>
        <begin position="68"/>
        <end position="71"/>
    </location>
</feature>
<feature type="turn" evidence="4">
    <location>
        <begin position="72"/>
        <end position="74"/>
    </location>
</feature>
<feature type="helix" evidence="4">
    <location>
        <begin position="75"/>
        <end position="81"/>
    </location>
</feature>
<feature type="strand" evidence="4">
    <location>
        <begin position="82"/>
        <end position="87"/>
    </location>
</feature>
<feature type="strand" evidence="4">
    <location>
        <begin position="92"/>
        <end position="95"/>
    </location>
</feature>
<feature type="helix" evidence="4">
    <location>
        <begin position="105"/>
        <end position="118"/>
    </location>
</feature>
<feature type="strand" evidence="4">
    <location>
        <begin position="122"/>
        <end position="129"/>
    </location>
</feature>
<feature type="helix" evidence="4">
    <location>
        <begin position="131"/>
        <end position="142"/>
    </location>
</feature>
<feature type="helix" evidence="4">
    <location>
        <begin position="144"/>
        <end position="146"/>
    </location>
</feature>
<feature type="strand" evidence="4">
    <location>
        <begin position="147"/>
        <end position="154"/>
    </location>
</feature>
<feature type="strand" evidence="4">
    <location>
        <begin position="156"/>
        <end position="158"/>
    </location>
</feature>
<feature type="helix" evidence="4">
    <location>
        <begin position="164"/>
        <end position="171"/>
    </location>
</feature>
<feature type="turn" evidence="4">
    <location>
        <begin position="172"/>
        <end position="174"/>
    </location>
</feature>
<feature type="helix" evidence="4">
    <location>
        <begin position="178"/>
        <end position="186"/>
    </location>
</feature>
<feature type="turn" evidence="4">
    <location>
        <begin position="187"/>
        <end position="189"/>
    </location>
</feature>
<feature type="helix" evidence="4">
    <location>
        <begin position="195"/>
        <end position="206"/>
    </location>
</feature>
<feature type="strand" evidence="4">
    <location>
        <begin position="209"/>
        <end position="211"/>
    </location>
</feature>
<feature type="strand" evidence="4">
    <location>
        <begin position="220"/>
        <end position="222"/>
    </location>
</feature>
<feature type="helix" evidence="4">
    <location>
        <begin position="227"/>
        <end position="231"/>
    </location>
</feature>
<feature type="strand" evidence="4">
    <location>
        <begin position="237"/>
        <end position="242"/>
    </location>
</feature>
<feature type="helix" evidence="4">
    <location>
        <begin position="250"/>
        <end position="260"/>
    </location>
</feature>
<feature type="strand" evidence="4">
    <location>
        <begin position="265"/>
        <end position="269"/>
    </location>
</feature>
<feature type="helix" evidence="4">
    <location>
        <begin position="276"/>
        <end position="279"/>
    </location>
</feature>
<feature type="helix" evidence="4">
    <location>
        <begin position="281"/>
        <end position="292"/>
    </location>
</feature>
<protein>
    <recommendedName>
        <fullName>Uncharacterized carboxylesterase nap</fullName>
        <ecNumber>3.1.1.1</ecNumber>
    </recommendedName>
</protein>
<sequence length="300" mass="33953">MSNHSSSIPELSDNGIRYYQTYNESLSLWPVRCKSFYISTRFGQTHVIASGPEDAPPLVLLHGALFSSTMWYPNIADWSSKYRTYAVDIIGDKNKSIPENVSGTRTDYANWLLDVFDNLGIEKSHMIGLSLGGLHTMNFLLRMPERVKSAAILSPAETFLPFHHDFYKYALGLTASNGVETFLNWMMNDQNVLHPIFVKQFKAGVMWQDGSRNPNPNADGFPYVFTDEELRSARVPILLLLGEHEVIYDPHSALHRASSFVPDIEAEVIKNAGHVLSMEQPTYVNERVMRFFNAETGISR</sequence>
<accession>P96688</accession>
<accession>Q797G3</accession>